<feature type="chain" id="PRO_1000214476" description="DNA-directed RNA polymerase subunit beta">
    <location>
        <begin position="1"/>
        <end position="1342"/>
    </location>
</feature>
<feature type="modified residue" description="N6-acetyllysine" evidence="1">
    <location>
        <position position="1022"/>
    </location>
</feature>
<feature type="modified residue" description="N6-acetyllysine" evidence="1">
    <location>
        <position position="1200"/>
    </location>
</feature>
<name>RPOB_ECOBW</name>
<accession>C5A0S7</accession>
<dbReference type="EC" id="2.7.7.6" evidence="1"/>
<dbReference type="EMBL" id="CP001396">
    <property type="protein sequence ID" value="ACR65493.1"/>
    <property type="molecule type" value="Genomic_DNA"/>
</dbReference>
<dbReference type="RefSeq" id="WP_000263098.1">
    <property type="nucleotide sequence ID" value="NC_012759.1"/>
</dbReference>
<dbReference type="SMR" id="C5A0S7"/>
<dbReference type="GeneID" id="93777907"/>
<dbReference type="KEGG" id="ebw:BWG_3646"/>
<dbReference type="HOGENOM" id="CLU_000524_4_3_6"/>
<dbReference type="GO" id="GO:0000428">
    <property type="term" value="C:DNA-directed RNA polymerase complex"/>
    <property type="evidence" value="ECO:0007669"/>
    <property type="project" value="UniProtKB-KW"/>
</dbReference>
<dbReference type="GO" id="GO:0003677">
    <property type="term" value="F:DNA binding"/>
    <property type="evidence" value="ECO:0007669"/>
    <property type="project" value="UniProtKB-UniRule"/>
</dbReference>
<dbReference type="GO" id="GO:0003899">
    <property type="term" value="F:DNA-directed RNA polymerase activity"/>
    <property type="evidence" value="ECO:0007669"/>
    <property type="project" value="UniProtKB-UniRule"/>
</dbReference>
<dbReference type="GO" id="GO:0032549">
    <property type="term" value="F:ribonucleoside binding"/>
    <property type="evidence" value="ECO:0007669"/>
    <property type="project" value="InterPro"/>
</dbReference>
<dbReference type="GO" id="GO:0006351">
    <property type="term" value="P:DNA-templated transcription"/>
    <property type="evidence" value="ECO:0007669"/>
    <property type="project" value="UniProtKB-UniRule"/>
</dbReference>
<dbReference type="CDD" id="cd00653">
    <property type="entry name" value="RNA_pol_B_RPB2"/>
    <property type="match status" value="1"/>
</dbReference>
<dbReference type="FunFam" id="2.30.150.10:FF:000001">
    <property type="entry name" value="DNA-directed RNA polymerase subunit beta"/>
    <property type="match status" value="1"/>
</dbReference>
<dbReference type="FunFam" id="2.40.270.10:FF:000003">
    <property type="entry name" value="DNA-directed RNA polymerase subunit beta"/>
    <property type="match status" value="1"/>
</dbReference>
<dbReference type="FunFam" id="2.40.270.10:FF:000004">
    <property type="entry name" value="DNA-directed RNA polymerase subunit beta"/>
    <property type="match status" value="1"/>
</dbReference>
<dbReference type="FunFam" id="2.40.50.100:FF:000006">
    <property type="entry name" value="DNA-directed RNA polymerase subunit beta"/>
    <property type="match status" value="1"/>
</dbReference>
<dbReference type="FunFam" id="2.40.50.150:FF:000001">
    <property type="entry name" value="DNA-directed RNA polymerase subunit beta"/>
    <property type="match status" value="1"/>
</dbReference>
<dbReference type="FunFam" id="3.90.1100.10:FF:000002">
    <property type="entry name" value="DNA-directed RNA polymerase subunit beta"/>
    <property type="match status" value="1"/>
</dbReference>
<dbReference type="FunFam" id="3.90.1110.10:FF:000001">
    <property type="entry name" value="DNA-directed RNA polymerase subunit beta"/>
    <property type="match status" value="1"/>
</dbReference>
<dbReference type="FunFam" id="3.90.1110.10:FF:000004">
    <property type="entry name" value="DNA-directed RNA polymerase subunit beta"/>
    <property type="match status" value="1"/>
</dbReference>
<dbReference type="FunFam" id="3.90.1800.10:FF:000001">
    <property type="entry name" value="DNA-directed RNA polymerase subunit beta"/>
    <property type="match status" value="1"/>
</dbReference>
<dbReference type="Gene3D" id="2.40.50.100">
    <property type="match status" value="1"/>
</dbReference>
<dbReference type="Gene3D" id="2.40.50.150">
    <property type="match status" value="1"/>
</dbReference>
<dbReference type="Gene3D" id="3.90.1100.10">
    <property type="match status" value="2"/>
</dbReference>
<dbReference type="Gene3D" id="6.10.140.1670">
    <property type="match status" value="1"/>
</dbReference>
<dbReference type="Gene3D" id="2.30.150.10">
    <property type="entry name" value="DNA-directed RNA polymerase, beta subunit, external 1 domain"/>
    <property type="match status" value="1"/>
</dbReference>
<dbReference type="Gene3D" id="2.40.270.10">
    <property type="entry name" value="DNA-directed RNA polymerase, subunit 2, domain 6"/>
    <property type="match status" value="1"/>
</dbReference>
<dbReference type="Gene3D" id="3.90.1800.10">
    <property type="entry name" value="RNA polymerase alpha subunit dimerisation domain"/>
    <property type="match status" value="1"/>
</dbReference>
<dbReference type="Gene3D" id="3.90.1110.10">
    <property type="entry name" value="RNA polymerase Rpb2, domain 2"/>
    <property type="match status" value="1"/>
</dbReference>
<dbReference type="HAMAP" id="MF_01321">
    <property type="entry name" value="RNApol_bact_RpoB"/>
    <property type="match status" value="1"/>
</dbReference>
<dbReference type="InterPro" id="IPR042107">
    <property type="entry name" value="DNA-dir_RNA_pol_bsu_ext_1_sf"/>
</dbReference>
<dbReference type="InterPro" id="IPR019462">
    <property type="entry name" value="DNA-dir_RNA_pol_bsu_external_1"/>
</dbReference>
<dbReference type="InterPro" id="IPR015712">
    <property type="entry name" value="DNA-dir_RNA_pol_su2"/>
</dbReference>
<dbReference type="InterPro" id="IPR007120">
    <property type="entry name" value="DNA-dir_RNAP_su2_dom"/>
</dbReference>
<dbReference type="InterPro" id="IPR037033">
    <property type="entry name" value="DNA-dir_RNAP_su2_hyb_sf"/>
</dbReference>
<dbReference type="InterPro" id="IPR010243">
    <property type="entry name" value="RNA_pol_bsu_bac"/>
</dbReference>
<dbReference type="InterPro" id="IPR007121">
    <property type="entry name" value="RNA_pol_bsu_CS"/>
</dbReference>
<dbReference type="InterPro" id="IPR007644">
    <property type="entry name" value="RNA_pol_bsu_protrusion"/>
</dbReference>
<dbReference type="InterPro" id="IPR007642">
    <property type="entry name" value="RNA_pol_Rpb2_2"/>
</dbReference>
<dbReference type="InterPro" id="IPR037034">
    <property type="entry name" value="RNA_pol_Rpb2_2_sf"/>
</dbReference>
<dbReference type="InterPro" id="IPR007645">
    <property type="entry name" value="RNA_pol_Rpb2_3"/>
</dbReference>
<dbReference type="InterPro" id="IPR007641">
    <property type="entry name" value="RNA_pol_Rpb2_7"/>
</dbReference>
<dbReference type="InterPro" id="IPR014724">
    <property type="entry name" value="RNA_pol_RPB2_OB-fold"/>
</dbReference>
<dbReference type="NCBIfam" id="NF001616">
    <property type="entry name" value="PRK00405.1"/>
    <property type="match status" value="1"/>
</dbReference>
<dbReference type="NCBIfam" id="TIGR02013">
    <property type="entry name" value="rpoB"/>
    <property type="match status" value="1"/>
</dbReference>
<dbReference type="PANTHER" id="PTHR20856">
    <property type="entry name" value="DNA-DIRECTED RNA POLYMERASE I SUBUNIT 2"/>
    <property type="match status" value="1"/>
</dbReference>
<dbReference type="Pfam" id="PF04563">
    <property type="entry name" value="RNA_pol_Rpb2_1"/>
    <property type="match status" value="1"/>
</dbReference>
<dbReference type="Pfam" id="PF04561">
    <property type="entry name" value="RNA_pol_Rpb2_2"/>
    <property type="match status" value="2"/>
</dbReference>
<dbReference type="Pfam" id="PF04565">
    <property type="entry name" value="RNA_pol_Rpb2_3"/>
    <property type="match status" value="1"/>
</dbReference>
<dbReference type="Pfam" id="PF10385">
    <property type="entry name" value="RNA_pol_Rpb2_45"/>
    <property type="match status" value="1"/>
</dbReference>
<dbReference type="Pfam" id="PF00562">
    <property type="entry name" value="RNA_pol_Rpb2_6"/>
    <property type="match status" value="1"/>
</dbReference>
<dbReference type="Pfam" id="PF04560">
    <property type="entry name" value="RNA_pol_Rpb2_7"/>
    <property type="match status" value="1"/>
</dbReference>
<dbReference type="SUPFAM" id="SSF64484">
    <property type="entry name" value="beta and beta-prime subunits of DNA dependent RNA-polymerase"/>
    <property type="match status" value="1"/>
</dbReference>
<dbReference type="PROSITE" id="PS01166">
    <property type="entry name" value="RNA_POL_BETA"/>
    <property type="match status" value="1"/>
</dbReference>
<comment type="function">
    <text evidence="1">DNA-dependent RNA polymerase catalyzes the transcription of DNA into RNA using the four ribonucleoside triphosphates as substrates.</text>
</comment>
<comment type="catalytic activity">
    <reaction evidence="1">
        <text>RNA(n) + a ribonucleoside 5'-triphosphate = RNA(n+1) + diphosphate</text>
        <dbReference type="Rhea" id="RHEA:21248"/>
        <dbReference type="Rhea" id="RHEA-COMP:14527"/>
        <dbReference type="Rhea" id="RHEA-COMP:17342"/>
        <dbReference type="ChEBI" id="CHEBI:33019"/>
        <dbReference type="ChEBI" id="CHEBI:61557"/>
        <dbReference type="ChEBI" id="CHEBI:140395"/>
        <dbReference type="EC" id="2.7.7.6"/>
    </reaction>
</comment>
<comment type="subunit">
    <text evidence="1">The RNAP catalytic core consists of 2 alpha, 1 beta, 1 beta' and 1 omega subunit. When a sigma factor is associated with the core the holoenzyme is formed, which can initiate transcription.</text>
</comment>
<comment type="similarity">
    <text evidence="1">Belongs to the RNA polymerase beta chain family.</text>
</comment>
<keyword id="KW-0007">Acetylation</keyword>
<keyword id="KW-0240">DNA-directed RNA polymerase</keyword>
<keyword id="KW-0548">Nucleotidyltransferase</keyword>
<keyword id="KW-0804">Transcription</keyword>
<keyword id="KW-0808">Transferase</keyword>
<reference key="1">
    <citation type="journal article" date="2009" name="J. Bacteriol.">
        <title>Genomic sequencing reveals regulatory mutations and recombinational events in the widely used MC4100 lineage of Escherichia coli K-12.</title>
        <authorList>
            <person name="Ferenci T."/>
            <person name="Zhou Z."/>
            <person name="Betteridge T."/>
            <person name="Ren Y."/>
            <person name="Liu Y."/>
            <person name="Feng L."/>
            <person name="Reeves P.R."/>
            <person name="Wang L."/>
        </authorList>
    </citation>
    <scope>NUCLEOTIDE SEQUENCE [LARGE SCALE GENOMIC DNA]</scope>
    <source>
        <strain>K12 / MC4100 / BW2952</strain>
    </source>
</reference>
<evidence type="ECO:0000255" key="1">
    <source>
        <dbReference type="HAMAP-Rule" id="MF_01321"/>
    </source>
</evidence>
<protein>
    <recommendedName>
        <fullName evidence="1">DNA-directed RNA polymerase subunit beta</fullName>
        <shortName evidence="1">RNAP subunit beta</shortName>
        <ecNumber evidence="1">2.7.7.6</ecNumber>
    </recommendedName>
    <alternativeName>
        <fullName evidence="1">RNA polymerase subunit beta</fullName>
    </alternativeName>
    <alternativeName>
        <fullName evidence="1">Transcriptase subunit beta</fullName>
    </alternativeName>
</protein>
<sequence>MVYSYTEKKRIRKDFGKRPQVLDVPYLLSIQLDSFQKFIEQDPEGQYGLEAAFRSVFPIQSYSGNSELQYVSYRLGEPVFDVQECQIRGVTYSAPLRVKLRLVIYEREAPEGTVKDIKEQEVYMGEIPLMTDNGTFVINGTERVIVSQLHRSPGVFFDSDKGKTHSSGKVLYNARIIPYRGSWLDFEFDPKDNLFVRIDRRRKLPATIILRALNYTTEQILDLFFEKVIFEIRDNKLQMELVPERLRGETASFDIEANGKVYVEKGRRITARHIRQLEKDDVKLIEVPVEYIAGKVVAKDYIDESTGELICAANMELSLDLLAKLSQSGHKRIETLFTNDLDHGPYISETLRVDPTNDRLSALVEIYRMMRPGEPPTREAAESLFENLFFSEDRYDLSAVGRMKFNRSLLREEIEGSGILSKDDIIDVMKKLIDIRNGKGEVDDIDHLGNRRIRSVGEMAENQFRVGLVRVERAVKERLSLGDLDTLMPQDMINAKPISAAVKEFFGSSQLSQFMDQNNPLSEITHKRRISALGPGGLTRERAGFEVRDVHPTHYGRVCPIETPEGPNIGLINSLSVYAQTNEYGFLETPYRKVTDGVVTDEIHYLSAIEEGNYVIAQANSNLDEEGHFVEDLVTCRSKGESSLFSRDQVDYMDVSTQQVVSVGASLIPFLEHDDANRALMGANMQRQAVPTLRADKPLVGTGMERAVAVDSGVTAVAKRGGVVQYVDASRIVIKVNEDEMYPGEAGIDIYNLTKYTRSNQNTCINQMPCVSLGEPVERGDVLADGPSTDLGELALGQNMRVAFMPWNGYNFEDSILVSERVVQEDRFTTIHIQELACVSRDTKLGPEEITADIPNVGEAALSKLDESGIVYIGAEVTGGDILVGKVTPKGETQLTPEEKLLRAIFGEKASDVKDSSLRVPNGVSGTVIDVQVFTRDGVEKDKRALEIEEMQLKQAKKDLSEELQILEAGLFSRIRAVLVAGGVEAEKLDKLPRDRWLELGLTDEEKQNQLEQLAEQYDELKHEFEKKLEAKRRKITQGDDLAPGVLKIVKVYLAVKRRIQPGDKMAGRHGNKGVISKINPIEDMPYDENGTPVDIVLNPLGVPSRMNIGQILETHLGMAAKGIGDKINAMLKQQQEVAKLREFIQRAYDLGADVRQKVDLSTFSDEEVMRLAENLRKGMPIATPVFDGAKEAEIKELLKLGDLPTSGQIRLYDGRTGEQFERPVTVGYMYMLKLNHLVDDKMHARSTGSYSLVTQQPLGGKAQFGGQRFGEMEVWALEAYGAAYTLQEMLTVKSDDVNGRTKMYKNIVDGNHQMEPGMPESFNVLLKEIRSLGINIELEDE</sequence>
<proteinExistence type="inferred from homology"/>
<gene>
    <name evidence="1" type="primary">rpoB</name>
    <name type="ordered locus">BWG_3646</name>
</gene>
<organism>
    <name type="scientific">Escherichia coli (strain K12 / MC4100 / BW2952)</name>
    <dbReference type="NCBI Taxonomy" id="595496"/>
    <lineage>
        <taxon>Bacteria</taxon>
        <taxon>Pseudomonadati</taxon>
        <taxon>Pseudomonadota</taxon>
        <taxon>Gammaproteobacteria</taxon>
        <taxon>Enterobacterales</taxon>
        <taxon>Enterobacteriaceae</taxon>
        <taxon>Escherichia</taxon>
    </lineage>
</organism>